<evidence type="ECO:0000250" key="1"/>
<evidence type="ECO:0000305" key="2"/>
<proteinExistence type="inferred from homology"/>
<gene>
    <name type="primary">tusE</name>
    <name type="ordered locus">bbp_412</name>
</gene>
<name>TUSE_BUCBP</name>
<keyword id="KW-0963">Cytoplasm</keyword>
<keyword id="KW-1185">Reference proteome</keyword>
<keyword id="KW-0808">Transferase</keyword>
<keyword id="KW-0819">tRNA processing</keyword>
<accession>Q89AA8</accession>
<organism>
    <name type="scientific">Buchnera aphidicola subsp. Baizongia pistaciae (strain Bp)</name>
    <dbReference type="NCBI Taxonomy" id="224915"/>
    <lineage>
        <taxon>Bacteria</taxon>
        <taxon>Pseudomonadati</taxon>
        <taxon>Pseudomonadota</taxon>
        <taxon>Gammaproteobacteria</taxon>
        <taxon>Enterobacterales</taxon>
        <taxon>Erwiniaceae</taxon>
        <taxon>Buchnera</taxon>
    </lineage>
</organism>
<reference key="1">
    <citation type="journal article" date="2003" name="Proc. Natl. Acad. Sci. U.S.A.">
        <title>Reductive genome evolution in Buchnera aphidicola.</title>
        <authorList>
            <person name="van Ham R.C.H.J."/>
            <person name="Kamerbeek J."/>
            <person name="Palacios C."/>
            <person name="Rausell C."/>
            <person name="Abascal F."/>
            <person name="Bastolla U."/>
            <person name="Fernandez J.M."/>
            <person name="Jimenez L."/>
            <person name="Postigo M."/>
            <person name="Silva F.J."/>
            <person name="Tamames J."/>
            <person name="Viguera E."/>
            <person name="Latorre A."/>
            <person name="Valencia A."/>
            <person name="Moran F."/>
            <person name="Moya A."/>
        </authorList>
    </citation>
    <scope>NUCLEOTIDE SEQUENCE [LARGE SCALE GENOMIC DNA]</scope>
    <source>
        <strain>Bp</strain>
    </source>
</reference>
<sequence length="94" mass="11150">MNYIPDWNEELAKKIAKSEFINMTPDHWEIIYIIRNFYLNFNLAPSIRILIKTLEKMKYNKKKCSSRYLLKLFPKNPIKQASKIAGVPKTNDCI</sequence>
<comment type="function">
    <text evidence="1">Part of a sulfur-relay system required for 2-thiolation of 5-methylaminomethyl-2-thiouridine (mnm(5)s(2)U) at tRNA wobble positions. Could accept sulfur from TusD (By similarity).</text>
</comment>
<comment type="subunit">
    <text evidence="1">Interacts with the TusBCD complex. Interacts with MnmA (By similarity).</text>
</comment>
<comment type="subcellular location">
    <subcellularLocation>
        <location evidence="1">Cytoplasm</location>
    </subcellularLocation>
</comment>
<comment type="similarity">
    <text evidence="2">Belongs to the DsrC/TusE family.</text>
</comment>
<protein>
    <recommendedName>
        <fullName>Sulfurtransferase TusE</fullName>
        <ecNumber>2.8.1.-</ecNumber>
    </recommendedName>
    <alternativeName>
        <fullName>tRNA 2-thiouridine synthesizing protein E</fullName>
    </alternativeName>
</protein>
<feature type="chain" id="PRO_0000216258" description="Sulfurtransferase TusE">
    <location>
        <begin position="1"/>
        <end position="94"/>
    </location>
</feature>
<feature type="active site" description="Cysteine persulfide intermediate" evidence="1">
    <location>
        <position position="93"/>
    </location>
</feature>
<dbReference type="EC" id="2.8.1.-"/>
<dbReference type="EMBL" id="AE016826">
    <property type="protein sequence ID" value="AAO27122.1"/>
    <property type="molecule type" value="Genomic_DNA"/>
</dbReference>
<dbReference type="RefSeq" id="WP_011091523.1">
    <property type="nucleotide sequence ID" value="NC_004545.1"/>
</dbReference>
<dbReference type="SMR" id="Q89AA8"/>
<dbReference type="STRING" id="224915.bbp_412"/>
<dbReference type="KEGG" id="bab:bbp_412"/>
<dbReference type="eggNOG" id="COG2920">
    <property type="taxonomic scope" value="Bacteria"/>
</dbReference>
<dbReference type="HOGENOM" id="CLU_153199_1_0_6"/>
<dbReference type="OrthoDB" id="9786347at2"/>
<dbReference type="Proteomes" id="UP000000601">
    <property type="component" value="Chromosome"/>
</dbReference>
<dbReference type="GO" id="GO:0005737">
    <property type="term" value="C:cytoplasm"/>
    <property type="evidence" value="ECO:0007669"/>
    <property type="project" value="UniProtKB-SubCell"/>
</dbReference>
<dbReference type="GO" id="GO:0097163">
    <property type="term" value="F:sulfur carrier activity"/>
    <property type="evidence" value="ECO:0007669"/>
    <property type="project" value="TreeGrafter"/>
</dbReference>
<dbReference type="GO" id="GO:0016740">
    <property type="term" value="F:transferase activity"/>
    <property type="evidence" value="ECO:0007669"/>
    <property type="project" value="UniProtKB-KW"/>
</dbReference>
<dbReference type="GO" id="GO:0002143">
    <property type="term" value="P:tRNA wobble position uridine thiolation"/>
    <property type="evidence" value="ECO:0007669"/>
    <property type="project" value="TreeGrafter"/>
</dbReference>
<dbReference type="Gene3D" id="1.10.10.370">
    <property type="entry name" value="DsrC-like protein, C-terminal domain"/>
    <property type="match status" value="1"/>
</dbReference>
<dbReference type="InterPro" id="IPR042072">
    <property type="entry name" value="DsrC-like_C"/>
</dbReference>
<dbReference type="InterPro" id="IPR025526">
    <property type="entry name" value="DsrC-like_dom_sf"/>
</dbReference>
<dbReference type="InterPro" id="IPR007453">
    <property type="entry name" value="DsrC/TusE"/>
</dbReference>
<dbReference type="NCBIfam" id="TIGR03342">
    <property type="entry name" value="dsrC_tusE_dsvC"/>
    <property type="match status" value="1"/>
</dbReference>
<dbReference type="PANTHER" id="PTHR37010">
    <property type="entry name" value="SULFURTRANSFERASE TUSE"/>
    <property type="match status" value="1"/>
</dbReference>
<dbReference type="PANTHER" id="PTHR37010:SF1">
    <property type="entry name" value="SULFURTRANSFERASE TUSE"/>
    <property type="match status" value="1"/>
</dbReference>
<dbReference type="Pfam" id="PF04358">
    <property type="entry name" value="DsrC"/>
    <property type="match status" value="1"/>
</dbReference>
<dbReference type="PIRSF" id="PIRSF006223">
    <property type="entry name" value="DsrC_TusE"/>
    <property type="match status" value="1"/>
</dbReference>
<dbReference type="SUPFAM" id="SSF69721">
    <property type="entry name" value="DsrC, the gamma subunit of dissimilatory sulfite reductase"/>
    <property type="match status" value="1"/>
</dbReference>